<keyword id="KW-1185">Reference proteome</keyword>
<protein>
    <recommendedName>
        <fullName>Uncharacterized protein YwbO</fullName>
    </recommendedName>
</protein>
<dbReference type="EMBL" id="X73124">
    <property type="protein sequence ID" value="CAA51586.1"/>
    <property type="molecule type" value="Genomic_DNA"/>
</dbReference>
<dbReference type="EMBL" id="AL009126">
    <property type="protein sequence ID" value="CAB15851.1"/>
    <property type="molecule type" value="Genomic_DNA"/>
</dbReference>
<dbReference type="PIR" id="S39685">
    <property type="entry name" value="S39685"/>
</dbReference>
<dbReference type="RefSeq" id="NP_391704.1">
    <property type="nucleotide sequence ID" value="NC_000964.3"/>
</dbReference>
<dbReference type="RefSeq" id="WP_003242591.1">
    <property type="nucleotide sequence ID" value="NZ_OZ025638.1"/>
</dbReference>
<dbReference type="SMR" id="P39598"/>
<dbReference type="FunCoup" id="P39598">
    <property type="interactions" value="312"/>
</dbReference>
<dbReference type="STRING" id="224308.BSU38250"/>
<dbReference type="jPOST" id="P39598"/>
<dbReference type="PaxDb" id="224308-BSU38250"/>
<dbReference type="DNASU" id="937309"/>
<dbReference type="EnsemblBacteria" id="CAB15851">
    <property type="protein sequence ID" value="CAB15851"/>
    <property type="gene ID" value="BSU_38250"/>
</dbReference>
<dbReference type="GeneID" id="937309"/>
<dbReference type="KEGG" id="bsu:BSU38250"/>
<dbReference type="PATRIC" id="fig|224308.179.peg.4141"/>
<dbReference type="eggNOG" id="COG2761">
    <property type="taxonomic scope" value="Bacteria"/>
</dbReference>
<dbReference type="InParanoid" id="P39598"/>
<dbReference type="OrthoDB" id="9799122at2"/>
<dbReference type="PhylomeDB" id="P39598"/>
<dbReference type="BioCyc" id="BSUB:BSU38250-MONOMER"/>
<dbReference type="Proteomes" id="UP000001570">
    <property type="component" value="Chromosome"/>
</dbReference>
<dbReference type="GO" id="GO:0016491">
    <property type="term" value="F:oxidoreductase activity"/>
    <property type="evidence" value="ECO:0007669"/>
    <property type="project" value="InterPro"/>
</dbReference>
<dbReference type="CDD" id="cd03024">
    <property type="entry name" value="DsbA_FrnE"/>
    <property type="match status" value="1"/>
</dbReference>
<dbReference type="Gene3D" id="3.40.30.10">
    <property type="entry name" value="Glutaredoxin"/>
    <property type="match status" value="1"/>
</dbReference>
<dbReference type="InterPro" id="IPR001853">
    <property type="entry name" value="DSBA-like_thioredoxin_dom"/>
</dbReference>
<dbReference type="InterPro" id="IPR036249">
    <property type="entry name" value="Thioredoxin-like_sf"/>
</dbReference>
<dbReference type="PANTHER" id="PTHR13887">
    <property type="entry name" value="GLUTATHIONE S-TRANSFERASE KAPPA"/>
    <property type="match status" value="1"/>
</dbReference>
<dbReference type="PANTHER" id="PTHR13887:SF33">
    <property type="entry name" value="ISOMERASE"/>
    <property type="match status" value="1"/>
</dbReference>
<dbReference type="Pfam" id="PF01323">
    <property type="entry name" value="DSBA"/>
    <property type="match status" value="1"/>
</dbReference>
<dbReference type="SUPFAM" id="SSF52833">
    <property type="entry name" value="Thioredoxin-like"/>
    <property type="match status" value="1"/>
</dbReference>
<name>YWBO_BACSU</name>
<proteinExistence type="predicted"/>
<gene>
    <name type="primary">ywbO</name>
    <name type="ordered locus">BSU38250</name>
    <name type="ORF">ipa-30d</name>
</gene>
<organism>
    <name type="scientific">Bacillus subtilis (strain 168)</name>
    <dbReference type="NCBI Taxonomy" id="224308"/>
    <lineage>
        <taxon>Bacteria</taxon>
        <taxon>Bacillati</taxon>
        <taxon>Bacillota</taxon>
        <taxon>Bacilli</taxon>
        <taxon>Bacillales</taxon>
        <taxon>Bacillaceae</taxon>
        <taxon>Bacillus</taxon>
    </lineage>
</organism>
<feature type="chain" id="PRO_0000049955" description="Uncharacterized protein YwbO">
    <location>
        <begin position="1"/>
        <end position="200"/>
    </location>
</feature>
<sequence>MTVHIKVYSDYVCPFCFVGKAAFEEAIKGKDVEVEWMPFELRPSPSPQLDPVNDPSKQYMWQTSIQPMAEKLGVEINFPNVSPHPYTDLAFEGFHFAKEYNKGHEYNTRVFQAFFQEDQNIGDIDILTKLAEEVGLDGASFKSALETRTYQDVQRQALKHAYEEADITAVPTFIIGDTVIPGAAGKDVFEKAISDEQKKK</sequence>
<accession>P39598</accession>
<reference key="1">
    <citation type="journal article" date="1993" name="Mol. Microbiol.">
        <title>Bacillus subtilis genome project: cloning and sequencing of the 97 kb region from 325 degrees to 333 degrees.</title>
        <authorList>
            <person name="Glaser P."/>
            <person name="Kunst F."/>
            <person name="Arnaud M."/>
            <person name="Coudart M.P."/>
            <person name="Gonzales W."/>
            <person name="Hullo M.-F."/>
            <person name="Ionescu M."/>
            <person name="Lubochinsky B."/>
            <person name="Marcelino L."/>
            <person name="Moszer I."/>
            <person name="Presecan E."/>
            <person name="Santana M."/>
            <person name="Schneider E."/>
            <person name="Schweizer J."/>
            <person name="Vertes A."/>
            <person name="Rapoport G."/>
            <person name="Danchin A."/>
        </authorList>
    </citation>
    <scope>NUCLEOTIDE SEQUENCE [GENOMIC DNA]</scope>
    <source>
        <strain>168</strain>
    </source>
</reference>
<reference key="2">
    <citation type="journal article" date="1997" name="Nature">
        <title>The complete genome sequence of the Gram-positive bacterium Bacillus subtilis.</title>
        <authorList>
            <person name="Kunst F."/>
            <person name="Ogasawara N."/>
            <person name="Moszer I."/>
            <person name="Albertini A.M."/>
            <person name="Alloni G."/>
            <person name="Azevedo V."/>
            <person name="Bertero M.G."/>
            <person name="Bessieres P."/>
            <person name="Bolotin A."/>
            <person name="Borchert S."/>
            <person name="Borriss R."/>
            <person name="Boursier L."/>
            <person name="Brans A."/>
            <person name="Braun M."/>
            <person name="Brignell S.C."/>
            <person name="Bron S."/>
            <person name="Brouillet S."/>
            <person name="Bruschi C.V."/>
            <person name="Caldwell B."/>
            <person name="Capuano V."/>
            <person name="Carter N.M."/>
            <person name="Choi S.-K."/>
            <person name="Codani J.-J."/>
            <person name="Connerton I.F."/>
            <person name="Cummings N.J."/>
            <person name="Daniel R.A."/>
            <person name="Denizot F."/>
            <person name="Devine K.M."/>
            <person name="Duesterhoeft A."/>
            <person name="Ehrlich S.D."/>
            <person name="Emmerson P.T."/>
            <person name="Entian K.-D."/>
            <person name="Errington J."/>
            <person name="Fabret C."/>
            <person name="Ferrari E."/>
            <person name="Foulger D."/>
            <person name="Fritz C."/>
            <person name="Fujita M."/>
            <person name="Fujita Y."/>
            <person name="Fuma S."/>
            <person name="Galizzi A."/>
            <person name="Galleron N."/>
            <person name="Ghim S.-Y."/>
            <person name="Glaser P."/>
            <person name="Goffeau A."/>
            <person name="Golightly E.J."/>
            <person name="Grandi G."/>
            <person name="Guiseppi G."/>
            <person name="Guy B.J."/>
            <person name="Haga K."/>
            <person name="Haiech J."/>
            <person name="Harwood C.R."/>
            <person name="Henaut A."/>
            <person name="Hilbert H."/>
            <person name="Holsappel S."/>
            <person name="Hosono S."/>
            <person name="Hullo M.-F."/>
            <person name="Itaya M."/>
            <person name="Jones L.-M."/>
            <person name="Joris B."/>
            <person name="Karamata D."/>
            <person name="Kasahara Y."/>
            <person name="Klaerr-Blanchard M."/>
            <person name="Klein C."/>
            <person name="Kobayashi Y."/>
            <person name="Koetter P."/>
            <person name="Koningstein G."/>
            <person name="Krogh S."/>
            <person name="Kumano M."/>
            <person name="Kurita K."/>
            <person name="Lapidus A."/>
            <person name="Lardinois S."/>
            <person name="Lauber J."/>
            <person name="Lazarevic V."/>
            <person name="Lee S.-M."/>
            <person name="Levine A."/>
            <person name="Liu H."/>
            <person name="Masuda S."/>
            <person name="Mauel C."/>
            <person name="Medigue C."/>
            <person name="Medina N."/>
            <person name="Mellado R.P."/>
            <person name="Mizuno M."/>
            <person name="Moestl D."/>
            <person name="Nakai S."/>
            <person name="Noback M."/>
            <person name="Noone D."/>
            <person name="O'Reilly M."/>
            <person name="Ogawa K."/>
            <person name="Ogiwara A."/>
            <person name="Oudega B."/>
            <person name="Park S.-H."/>
            <person name="Parro V."/>
            <person name="Pohl T.M."/>
            <person name="Portetelle D."/>
            <person name="Porwollik S."/>
            <person name="Prescott A.M."/>
            <person name="Presecan E."/>
            <person name="Pujic P."/>
            <person name="Purnelle B."/>
            <person name="Rapoport G."/>
            <person name="Rey M."/>
            <person name="Reynolds S."/>
            <person name="Rieger M."/>
            <person name="Rivolta C."/>
            <person name="Rocha E."/>
            <person name="Roche B."/>
            <person name="Rose M."/>
            <person name="Sadaie Y."/>
            <person name="Sato T."/>
            <person name="Scanlan E."/>
            <person name="Schleich S."/>
            <person name="Schroeter R."/>
            <person name="Scoffone F."/>
            <person name="Sekiguchi J."/>
            <person name="Sekowska A."/>
            <person name="Seror S.J."/>
            <person name="Serror P."/>
            <person name="Shin B.-S."/>
            <person name="Soldo B."/>
            <person name="Sorokin A."/>
            <person name="Tacconi E."/>
            <person name="Takagi T."/>
            <person name="Takahashi H."/>
            <person name="Takemaru K."/>
            <person name="Takeuchi M."/>
            <person name="Tamakoshi A."/>
            <person name="Tanaka T."/>
            <person name="Terpstra P."/>
            <person name="Tognoni A."/>
            <person name="Tosato V."/>
            <person name="Uchiyama S."/>
            <person name="Vandenbol M."/>
            <person name="Vannier F."/>
            <person name="Vassarotti A."/>
            <person name="Viari A."/>
            <person name="Wambutt R."/>
            <person name="Wedler E."/>
            <person name="Wedler H."/>
            <person name="Weitzenegger T."/>
            <person name="Winters P."/>
            <person name="Wipat A."/>
            <person name="Yamamoto H."/>
            <person name="Yamane K."/>
            <person name="Yasumoto K."/>
            <person name="Yata K."/>
            <person name="Yoshida K."/>
            <person name="Yoshikawa H.-F."/>
            <person name="Zumstein E."/>
            <person name="Yoshikawa H."/>
            <person name="Danchin A."/>
        </authorList>
    </citation>
    <scope>NUCLEOTIDE SEQUENCE [LARGE SCALE GENOMIC DNA]</scope>
    <source>
        <strain>168</strain>
    </source>
</reference>